<accession>P0AAX2</accession>
<accession>P75759</accession>
<keyword id="KW-0046">Antibiotic resistance</keyword>
<keyword id="KW-0997">Cell inner membrane</keyword>
<keyword id="KW-1003">Cell membrane</keyword>
<keyword id="KW-0472">Membrane</keyword>
<keyword id="KW-1185">Reference proteome</keyword>
<keyword id="KW-0812">Transmembrane</keyword>
<keyword id="KW-1133">Transmembrane helix</keyword>
<keyword id="KW-0813">Transport</keyword>
<evidence type="ECO:0000250" key="1"/>
<evidence type="ECO:0000255" key="2">
    <source>
        <dbReference type="HAMAP-Rule" id="MF_01484"/>
    </source>
</evidence>
<organism>
    <name type="scientific">Shigella flexneri</name>
    <dbReference type="NCBI Taxonomy" id="623"/>
    <lineage>
        <taxon>Bacteria</taxon>
        <taxon>Pseudomonadati</taxon>
        <taxon>Pseudomonadota</taxon>
        <taxon>Gammaproteobacteria</taxon>
        <taxon>Enterobacterales</taxon>
        <taxon>Enterobacteriaceae</taxon>
        <taxon>Shigella</taxon>
    </lineage>
</organism>
<name>ACRZ_SHIFL</name>
<protein>
    <recommendedName>
        <fullName evidence="2">Multidrug efflux pump accessory protein AcrZ</fullName>
    </recommendedName>
    <alternativeName>
        <fullName evidence="2">AcrAB-TolC multidrug efflux pump accessory protein AcrZ</fullName>
    </alternativeName>
    <alternativeName>
        <fullName evidence="2">Acridine resistance protein Z</fullName>
    </alternativeName>
</protein>
<proteinExistence type="inferred from homology"/>
<comment type="function">
    <text evidence="2">AcrA-AcrB-AcrZ-TolC is a drug efflux protein complex with a broad substrate specificity. This protein binds to AcrB and is required for efflux of some but not all substrates, suggesting it may influence the specificity of drug export.</text>
</comment>
<comment type="subunit">
    <text evidence="2">Part of the AcrA-AcrB-AcrZ-TolC efflux pump, interacts directly with AcrB.</text>
</comment>
<comment type="subcellular location">
    <subcellularLocation>
        <location evidence="2">Cell inner membrane</location>
        <topology evidence="2">Single-pass membrane protein</topology>
    </subcellularLocation>
</comment>
<comment type="similarity">
    <text evidence="2">Belongs to the AcrZ family.</text>
</comment>
<dbReference type="EMBL" id="AE005674">
    <property type="protein sequence ID" value="AAN42186.2"/>
    <property type="molecule type" value="Genomic_DNA"/>
</dbReference>
<dbReference type="EMBL" id="AE014073">
    <property type="protein sequence ID" value="AAP16059.1"/>
    <property type="molecule type" value="Genomic_DNA"/>
</dbReference>
<dbReference type="RefSeq" id="NP_706479.2">
    <property type="nucleotide sequence ID" value="NC_004337.2"/>
</dbReference>
<dbReference type="RefSeq" id="WP_000891515.1">
    <property type="nucleotide sequence ID" value="NZ_WPGW01000046.1"/>
</dbReference>
<dbReference type="SMR" id="P0AAX2"/>
<dbReference type="STRING" id="198214.SF0542"/>
<dbReference type="PaxDb" id="198214-SF0542"/>
<dbReference type="GeneID" id="1023485"/>
<dbReference type="GeneID" id="93776719"/>
<dbReference type="KEGG" id="sfl:SF0542"/>
<dbReference type="KEGG" id="sfx:S0550"/>
<dbReference type="PATRIC" id="fig|198214.7.peg.631"/>
<dbReference type="HOGENOM" id="CLU_196028_0_1_6"/>
<dbReference type="Proteomes" id="UP000001006">
    <property type="component" value="Chromosome"/>
</dbReference>
<dbReference type="Proteomes" id="UP000002673">
    <property type="component" value="Chromosome"/>
</dbReference>
<dbReference type="GO" id="GO:0005886">
    <property type="term" value="C:plasma membrane"/>
    <property type="evidence" value="ECO:0007669"/>
    <property type="project" value="UniProtKB-SubCell"/>
</dbReference>
<dbReference type="GO" id="GO:0042910">
    <property type="term" value="F:xenobiotic transmembrane transporter activity"/>
    <property type="evidence" value="ECO:0007669"/>
    <property type="project" value="UniProtKB-UniRule"/>
</dbReference>
<dbReference type="GO" id="GO:0046677">
    <property type="term" value="P:response to antibiotic"/>
    <property type="evidence" value="ECO:0007669"/>
    <property type="project" value="UniProtKB-KW"/>
</dbReference>
<dbReference type="GO" id="GO:1990961">
    <property type="term" value="P:xenobiotic detoxification by transmembrane export across the plasma membrane"/>
    <property type="evidence" value="ECO:0007669"/>
    <property type="project" value="InterPro"/>
</dbReference>
<dbReference type="Gene3D" id="6.10.250.2480">
    <property type="match status" value="1"/>
</dbReference>
<dbReference type="HAMAP" id="MF_01484">
    <property type="entry name" value="AcrZ"/>
    <property type="match status" value="1"/>
</dbReference>
<dbReference type="InterPro" id="IPR019702">
    <property type="entry name" value="AcrZ"/>
</dbReference>
<dbReference type="InterPro" id="IPR053730">
    <property type="entry name" value="MEP_Accessory_AcrZ"/>
</dbReference>
<dbReference type="Pfam" id="PF10766">
    <property type="entry name" value="AcrZ"/>
    <property type="match status" value="1"/>
</dbReference>
<reference key="1">
    <citation type="journal article" date="2002" name="Nucleic Acids Res.">
        <title>Genome sequence of Shigella flexneri 2a: insights into pathogenicity through comparison with genomes of Escherichia coli K12 and O157.</title>
        <authorList>
            <person name="Jin Q."/>
            <person name="Yuan Z."/>
            <person name="Xu J."/>
            <person name="Wang Y."/>
            <person name="Shen Y."/>
            <person name="Lu W."/>
            <person name="Wang J."/>
            <person name="Liu H."/>
            <person name="Yang J."/>
            <person name="Yang F."/>
            <person name="Zhang X."/>
            <person name="Zhang J."/>
            <person name="Yang G."/>
            <person name="Wu H."/>
            <person name="Qu D."/>
            <person name="Dong J."/>
            <person name="Sun L."/>
            <person name="Xue Y."/>
            <person name="Zhao A."/>
            <person name="Gao Y."/>
            <person name="Zhu J."/>
            <person name="Kan B."/>
            <person name="Ding K."/>
            <person name="Chen S."/>
            <person name="Cheng H."/>
            <person name="Yao Z."/>
            <person name="He B."/>
            <person name="Chen R."/>
            <person name="Ma D."/>
            <person name="Qiang B."/>
            <person name="Wen Y."/>
            <person name="Hou Y."/>
            <person name="Yu J."/>
        </authorList>
    </citation>
    <scope>NUCLEOTIDE SEQUENCE [LARGE SCALE GENOMIC DNA]</scope>
    <source>
        <strain>301 / Serotype 2a</strain>
    </source>
</reference>
<reference key="2">
    <citation type="journal article" date="2003" name="Infect. Immun.">
        <title>Complete genome sequence and comparative genomics of Shigella flexneri serotype 2a strain 2457T.</title>
        <authorList>
            <person name="Wei J."/>
            <person name="Goldberg M.B."/>
            <person name="Burland V."/>
            <person name="Venkatesan M.M."/>
            <person name="Deng W."/>
            <person name="Fournier G."/>
            <person name="Mayhew G.F."/>
            <person name="Plunkett G. III"/>
            <person name="Rose D.J."/>
            <person name="Darling A."/>
            <person name="Mau B."/>
            <person name="Perna N.T."/>
            <person name="Payne S.M."/>
            <person name="Runyen-Janecky L.J."/>
            <person name="Zhou S."/>
            <person name="Schwartz D.C."/>
            <person name="Blattner F.R."/>
        </authorList>
    </citation>
    <scope>NUCLEOTIDE SEQUENCE [LARGE SCALE GENOMIC DNA]</scope>
    <source>
        <strain>ATCC 700930 / 2457T / Serotype 2a</strain>
    </source>
</reference>
<feature type="chain" id="PRO_0000042563" description="Multidrug efflux pump accessory protein AcrZ">
    <location>
        <begin position="1"/>
        <end position="49"/>
    </location>
</feature>
<feature type="topological domain" description="Periplasmic" evidence="1">
    <location>
        <begin position="1"/>
        <end position="7"/>
    </location>
</feature>
<feature type="transmembrane region" description="Helical" evidence="2">
    <location>
        <begin position="8"/>
        <end position="28"/>
    </location>
</feature>
<feature type="topological domain" description="Cytoplasmic" evidence="1">
    <location>
        <begin position="29"/>
        <end position="49"/>
    </location>
</feature>
<sequence>MLELLKSLVFAVIMVPVVMAIILGLIYGLGEVFNIFSGVGKKDQPGQNH</sequence>
<gene>
    <name evidence="2" type="primary">acrZ</name>
    <name type="ordered locus">SF0542</name>
    <name type="ordered locus">S0550</name>
</gene>